<protein>
    <recommendedName>
        <fullName>GrpE protein homolog 2, mitochondrial</fullName>
    </recommendedName>
    <alternativeName>
        <fullName>Mt-GrpE#2</fullName>
    </alternativeName>
</protein>
<keyword id="KW-0007">Acetylation</keyword>
<keyword id="KW-0025">Alternative splicing</keyword>
<keyword id="KW-0143">Chaperone</keyword>
<keyword id="KW-0496">Mitochondrion</keyword>
<keyword id="KW-1267">Proteomics identification</keyword>
<keyword id="KW-1185">Reference proteome</keyword>
<keyword id="KW-0809">Transit peptide</keyword>
<comment type="function">
    <text evidence="1">Essential component of the PAM complex, a complex required for the translocation of transit peptide-containing proteins from the inner membrane into the mitochondrial matrix in an ATP-dependent manner. Seems to control the nucleotide-dependent binding of mitochondrial HSP70 to substrate proteins. Stimulates ATPase activity of mt-HSP70. May also serve to modulate the interconversion of oligomeric (inactive) and monomeric (active) forms of mt-HSP70 (By similarity).</text>
</comment>
<comment type="subunit">
    <text evidence="1">Probable component of the PAM complex at least composed of a mitochondrial HSP70 protein, GRPEL1 or GRPEL2, TIMM44, TIMM16/PAM16 and TIMM14/DNAJC19.</text>
</comment>
<comment type="interaction">
    <interactant intactId="EBI-13943406">
        <id>Q8TAA5</id>
    </interactant>
    <interactant intactId="EBI-359002">
        <id>P11182</id>
        <label>DBT</label>
    </interactant>
    <organismsDiffer>false</organismsDiffer>
    <experiments>3</experiments>
</comment>
<comment type="subcellular location">
    <subcellularLocation>
        <location evidence="1">Mitochondrion matrix</location>
    </subcellularLocation>
</comment>
<comment type="alternative products">
    <event type="alternative splicing"/>
    <isoform>
        <id>Q8TAA5-1</id>
        <name>1</name>
        <sequence type="displayed"/>
    </isoform>
    <isoform>
        <id>Q8TAA5-2</id>
        <name>2</name>
        <sequence type="described" ref="VSP_057020 VSP_057021"/>
    </isoform>
</comment>
<comment type="similarity">
    <text evidence="3">Belongs to the GrpE family.</text>
</comment>
<organism>
    <name type="scientific">Homo sapiens</name>
    <name type="common">Human</name>
    <dbReference type="NCBI Taxonomy" id="9606"/>
    <lineage>
        <taxon>Eukaryota</taxon>
        <taxon>Metazoa</taxon>
        <taxon>Chordata</taxon>
        <taxon>Craniata</taxon>
        <taxon>Vertebrata</taxon>
        <taxon>Euteleostomi</taxon>
        <taxon>Mammalia</taxon>
        <taxon>Eutheria</taxon>
        <taxon>Euarchontoglires</taxon>
        <taxon>Primates</taxon>
        <taxon>Haplorrhini</taxon>
        <taxon>Catarrhini</taxon>
        <taxon>Hominidae</taxon>
        <taxon>Homo</taxon>
    </lineage>
</organism>
<accession>Q8TAA5</accession>
<accession>B4DFA6</accession>
<accession>Q49AJ6</accession>
<evidence type="ECO:0000250" key="1"/>
<evidence type="ECO:0000303" key="2">
    <source>
    </source>
</evidence>
<evidence type="ECO:0000305" key="3"/>
<evidence type="ECO:0007744" key="4">
    <source>
    </source>
</evidence>
<feature type="transit peptide" description="Mitochondrion" evidence="1">
    <location>
        <begin position="1"/>
        <end position="32"/>
    </location>
</feature>
<feature type="chain" id="PRO_0000013052" description="GrpE protein homolog 2, mitochondrial">
    <location>
        <begin position="33"/>
        <end position="225"/>
    </location>
</feature>
<feature type="modified residue" description="N6-acetyllysine" evidence="4">
    <location>
        <position position="142"/>
    </location>
</feature>
<feature type="splice variant" id="VSP_057020" description="In isoform 2." evidence="2">
    <original>VRYQRAIADCENIRRRTQRCVEDAKIFGIQSFCKDLVEVADILEK</original>
    <variation>ESRVSVRTWWRWLTFWRRLQSAFLKNRSLRTKSSLWRRSSEGCCF</variation>
    <location>
        <begin position="78"/>
        <end position="122"/>
    </location>
</feature>
<feature type="splice variant" id="VSP_057021" description="In isoform 2." evidence="2">
    <location>
        <begin position="123"/>
        <end position="225"/>
    </location>
</feature>
<dbReference type="EMBL" id="AK074293">
    <property type="protein sequence ID" value="BAB85040.1"/>
    <property type="molecule type" value="mRNA"/>
</dbReference>
<dbReference type="EMBL" id="AK294005">
    <property type="protein sequence ID" value="BAG57367.1"/>
    <property type="molecule type" value="mRNA"/>
</dbReference>
<dbReference type="EMBL" id="AC131025">
    <property type="status" value="NOT_ANNOTATED_CDS"/>
    <property type="molecule type" value="Genomic_DNA"/>
</dbReference>
<dbReference type="EMBL" id="BC036678">
    <property type="protein sequence ID" value="AAH36678.1"/>
    <property type="molecule type" value="mRNA"/>
</dbReference>
<dbReference type="EMBL" id="BC070090">
    <property type="protein sequence ID" value="AAH70090.1"/>
    <property type="molecule type" value="mRNA"/>
</dbReference>
<dbReference type="CCDS" id="CCDS4295.1">
    <molecule id="Q8TAA5-1"/>
</dbReference>
<dbReference type="RefSeq" id="NP_689620.2">
    <molecule id="Q8TAA5-1"/>
    <property type="nucleotide sequence ID" value="NM_152407.3"/>
</dbReference>
<dbReference type="SMR" id="Q8TAA5"/>
<dbReference type="BioGRID" id="126391">
    <property type="interactions" value="29"/>
</dbReference>
<dbReference type="ComplexPortal" id="CPX-6129">
    <property type="entry name" value="TIM23 mitochondrial inner membrane pre-sequence translocase complex, TIM17A variant"/>
</dbReference>
<dbReference type="ComplexPortal" id="CPX-6130">
    <property type="entry name" value="TIM23 mitochondrial inner membrane pre-sequence translocase complex, TIM17B variant"/>
</dbReference>
<dbReference type="CORUM" id="Q8TAA5"/>
<dbReference type="FunCoup" id="Q8TAA5">
    <property type="interactions" value="743"/>
</dbReference>
<dbReference type="IntAct" id="Q8TAA5">
    <property type="interactions" value="11"/>
</dbReference>
<dbReference type="STRING" id="9606.ENSP00000329558"/>
<dbReference type="GlyGen" id="Q8TAA5">
    <property type="glycosylation" value="1 site, 1 O-linked glycan (1 site)"/>
</dbReference>
<dbReference type="iPTMnet" id="Q8TAA5"/>
<dbReference type="PhosphoSitePlus" id="Q8TAA5"/>
<dbReference type="SwissPalm" id="Q8TAA5"/>
<dbReference type="BioMuta" id="GRPEL2"/>
<dbReference type="jPOST" id="Q8TAA5"/>
<dbReference type="MassIVE" id="Q8TAA5"/>
<dbReference type="PaxDb" id="9606-ENSP00000329558"/>
<dbReference type="PeptideAtlas" id="Q8TAA5"/>
<dbReference type="ProteomicsDB" id="4019"/>
<dbReference type="ProteomicsDB" id="73847">
    <molecule id="Q8TAA5-1"/>
</dbReference>
<dbReference type="Pumba" id="Q8TAA5"/>
<dbReference type="Antibodypedia" id="3037">
    <property type="antibodies" value="117 antibodies from 20 providers"/>
</dbReference>
<dbReference type="DNASU" id="134266"/>
<dbReference type="Ensembl" id="ENST00000329271.8">
    <molecule id="Q8TAA5-1"/>
    <property type="protein sequence ID" value="ENSP00000329558.3"/>
    <property type="gene ID" value="ENSG00000164284.15"/>
</dbReference>
<dbReference type="Ensembl" id="ENST00000416916.2">
    <molecule id="Q8TAA5-2"/>
    <property type="protein sequence ID" value="ENSP00000397302.2"/>
    <property type="gene ID" value="ENSG00000164284.15"/>
</dbReference>
<dbReference type="GeneID" id="134266"/>
<dbReference type="KEGG" id="hsa:134266"/>
<dbReference type="MANE-Select" id="ENST00000329271.8">
    <property type="protein sequence ID" value="ENSP00000329558.3"/>
    <property type="RefSeq nucleotide sequence ID" value="NM_152407.4"/>
    <property type="RefSeq protein sequence ID" value="NP_689620.2"/>
</dbReference>
<dbReference type="UCSC" id="uc003lqj.4">
    <molecule id="Q8TAA5-1"/>
    <property type="organism name" value="human"/>
</dbReference>
<dbReference type="AGR" id="HGNC:21060"/>
<dbReference type="CTD" id="134266"/>
<dbReference type="DisGeNET" id="134266"/>
<dbReference type="GeneCards" id="GRPEL2"/>
<dbReference type="HGNC" id="HGNC:21060">
    <property type="gene designation" value="GRPEL2"/>
</dbReference>
<dbReference type="HPA" id="ENSG00000164284">
    <property type="expression patterns" value="Tissue enhanced (esophagus)"/>
</dbReference>
<dbReference type="MIM" id="618545">
    <property type="type" value="gene"/>
</dbReference>
<dbReference type="neXtProt" id="NX_Q8TAA5"/>
<dbReference type="OpenTargets" id="ENSG00000164284"/>
<dbReference type="PharmGKB" id="PA134885090"/>
<dbReference type="VEuPathDB" id="HostDB:ENSG00000164284"/>
<dbReference type="eggNOG" id="KOG3003">
    <property type="taxonomic scope" value="Eukaryota"/>
</dbReference>
<dbReference type="GeneTree" id="ENSGT00390000005589"/>
<dbReference type="HOGENOM" id="CLU_057217_0_1_1"/>
<dbReference type="InParanoid" id="Q8TAA5"/>
<dbReference type="OMA" id="QHELICH"/>
<dbReference type="OrthoDB" id="201635at2759"/>
<dbReference type="PAN-GO" id="Q8TAA5">
    <property type="GO annotations" value="4 GO annotations based on evolutionary models"/>
</dbReference>
<dbReference type="PhylomeDB" id="Q8TAA5"/>
<dbReference type="TreeFam" id="TF105284"/>
<dbReference type="PathwayCommons" id="Q8TAA5"/>
<dbReference type="Reactome" id="R-HSA-1268020">
    <property type="pathway name" value="Mitochondrial protein import"/>
</dbReference>
<dbReference type="SignaLink" id="Q8TAA5"/>
<dbReference type="SIGNOR" id="Q8TAA5"/>
<dbReference type="BioGRID-ORCS" id="134266">
    <property type="hits" value="10 hits in 1148 CRISPR screens"/>
</dbReference>
<dbReference type="CD-CODE" id="91857CE7">
    <property type="entry name" value="Nucleolus"/>
</dbReference>
<dbReference type="ChiTaRS" id="GRPEL2">
    <property type="organism name" value="human"/>
</dbReference>
<dbReference type="GenomeRNAi" id="134266"/>
<dbReference type="Pharos" id="Q8TAA5">
    <property type="development level" value="Tbio"/>
</dbReference>
<dbReference type="PRO" id="PR:Q8TAA5"/>
<dbReference type="Proteomes" id="UP000005640">
    <property type="component" value="Chromosome 5"/>
</dbReference>
<dbReference type="RNAct" id="Q8TAA5">
    <property type="molecule type" value="protein"/>
</dbReference>
<dbReference type="Bgee" id="ENSG00000164284">
    <property type="expression patterns" value="Expressed in lower esophagus mucosa and 193 other cell types or tissues"/>
</dbReference>
<dbReference type="ExpressionAtlas" id="Q8TAA5">
    <property type="expression patterns" value="baseline and differential"/>
</dbReference>
<dbReference type="GO" id="GO:0005743">
    <property type="term" value="C:mitochondrial inner membrane"/>
    <property type="evidence" value="ECO:0000303"/>
    <property type="project" value="ComplexPortal"/>
</dbReference>
<dbReference type="GO" id="GO:0005739">
    <property type="term" value="C:mitochondrion"/>
    <property type="evidence" value="ECO:0000314"/>
    <property type="project" value="HPA"/>
</dbReference>
<dbReference type="GO" id="GO:0001405">
    <property type="term" value="C:PAM complex, Tim23 associated import motor"/>
    <property type="evidence" value="ECO:0000318"/>
    <property type="project" value="GO_Central"/>
</dbReference>
<dbReference type="GO" id="GO:0005744">
    <property type="term" value="C:TIM23 mitochondrial import inner membrane translocase complex"/>
    <property type="evidence" value="ECO:0000303"/>
    <property type="project" value="ComplexPortal"/>
</dbReference>
<dbReference type="GO" id="GO:0000774">
    <property type="term" value="F:adenyl-nucleotide exchange factor activity"/>
    <property type="evidence" value="ECO:0000318"/>
    <property type="project" value="GO_Central"/>
</dbReference>
<dbReference type="GO" id="GO:0042803">
    <property type="term" value="F:protein homodimerization activity"/>
    <property type="evidence" value="ECO:0007669"/>
    <property type="project" value="InterPro"/>
</dbReference>
<dbReference type="GO" id="GO:0051087">
    <property type="term" value="F:protein-folding chaperone binding"/>
    <property type="evidence" value="ECO:0007669"/>
    <property type="project" value="InterPro"/>
</dbReference>
<dbReference type="GO" id="GO:0051082">
    <property type="term" value="F:unfolded protein binding"/>
    <property type="evidence" value="ECO:0000318"/>
    <property type="project" value="GO_Central"/>
</dbReference>
<dbReference type="GO" id="GO:0006886">
    <property type="term" value="P:intracellular protein transport"/>
    <property type="evidence" value="ECO:0000303"/>
    <property type="project" value="ComplexPortal"/>
</dbReference>
<dbReference type="GO" id="GO:0006457">
    <property type="term" value="P:protein folding"/>
    <property type="evidence" value="ECO:0007669"/>
    <property type="project" value="InterPro"/>
</dbReference>
<dbReference type="GO" id="GO:0030150">
    <property type="term" value="P:protein import into mitochondrial matrix"/>
    <property type="evidence" value="ECO:0000318"/>
    <property type="project" value="GO_Central"/>
</dbReference>
<dbReference type="CDD" id="cd00446">
    <property type="entry name" value="GrpE"/>
    <property type="match status" value="1"/>
</dbReference>
<dbReference type="FunFam" id="2.30.22.10:FF:000003">
    <property type="entry name" value="GrpE protein homolog"/>
    <property type="match status" value="1"/>
</dbReference>
<dbReference type="FunFam" id="3.90.20.20:FF:000004">
    <property type="entry name" value="GrpE protein homolog"/>
    <property type="match status" value="1"/>
</dbReference>
<dbReference type="Gene3D" id="3.90.20.20">
    <property type="match status" value="1"/>
</dbReference>
<dbReference type="Gene3D" id="2.30.22.10">
    <property type="entry name" value="Head domain of nucleotide exchange factor GrpE"/>
    <property type="match status" value="1"/>
</dbReference>
<dbReference type="HAMAP" id="MF_01151">
    <property type="entry name" value="GrpE"/>
    <property type="match status" value="1"/>
</dbReference>
<dbReference type="InterPro" id="IPR000740">
    <property type="entry name" value="GrpE"/>
</dbReference>
<dbReference type="InterPro" id="IPR013805">
    <property type="entry name" value="GrpE_coiled_coil"/>
</dbReference>
<dbReference type="InterPro" id="IPR009012">
    <property type="entry name" value="GrpE_head"/>
</dbReference>
<dbReference type="PANTHER" id="PTHR21237">
    <property type="entry name" value="GRPE PROTEIN"/>
    <property type="match status" value="1"/>
</dbReference>
<dbReference type="PANTHER" id="PTHR21237:SF10">
    <property type="entry name" value="GRPE PROTEIN HOMOLOG 2, MITOCHONDRIAL"/>
    <property type="match status" value="1"/>
</dbReference>
<dbReference type="Pfam" id="PF01025">
    <property type="entry name" value="GrpE"/>
    <property type="match status" value="1"/>
</dbReference>
<dbReference type="PRINTS" id="PR00773">
    <property type="entry name" value="GRPEPROTEIN"/>
</dbReference>
<dbReference type="SUPFAM" id="SSF58014">
    <property type="entry name" value="Coiled-coil domain of nucleotide exchange factor GrpE"/>
    <property type="match status" value="1"/>
</dbReference>
<dbReference type="SUPFAM" id="SSF51064">
    <property type="entry name" value="Head domain of nucleotide exchange factor GrpE"/>
    <property type="match status" value="1"/>
</dbReference>
<dbReference type="PROSITE" id="PS01071">
    <property type="entry name" value="GRPE"/>
    <property type="match status" value="1"/>
</dbReference>
<reference key="1">
    <citation type="journal article" date="2004" name="Nat. Genet.">
        <title>Complete sequencing and characterization of 21,243 full-length human cDNAs.</title>
        <authorList>
            <person name="Ota T."/>
            <person name="Suzuki Y."/>
            <person name="Nishikawa T."/>
            <person name="Otsuki T."/>
            <person name="Sugiyama T."/>
            <person name="Irie R."/>
            <person name="Wakamatsu A."/>
            <person name="Hayashi K."/>
            <person name="Sato H."/>
            <person name="Nagai K."/>
            <person name="Kimura K."/>
            <person name="Makita H."/>
            <person name="Sekine M."/>
            <person name="Obayashi M."/>
            <person name="Nishi T."/>
            <person name="Shibahara T."/>
            <person name="Tanaka T."/>
            <person name="Ishii S."/>
            <person name="Yamamoto J."/>
            <person name="Saito K."/>
            <person name="Kawai Y."/>
            <person name="Isono Y."/>
            <person name="Nakamura Y."/>
            <person name="Nagahari K."/>
            <person name="Murakami K."/>
            <person name="Yasuda T."/>
            <person name="Iwayanagi T."/>
            <person name="Wagatsuma M."/>
            <person name="Shiratori A."/>
            <person name="Sudo H."/>
            <person name="Hosoiri T."/>
            <person name="Kaku Y."/>
            <person name="Kodaira H."/>
            <person name="Kondo H."/>
            <person name="Sugawara M."/>
            <person name="Takahashi M."/>
            <person name="Kanda K."/>
            <person name="Yokoi T."/>
            <person name="Furuya T."/>
            <person name="Kikkawa E."/>
            <person name="Omura Y."/>
            <person name="Abe K."/>
            <person name="Kamihara K."/>
            <person name="Katsuta N."/>
            <person name="Sato K."/>
            <person name="Tanikawa M."/>
            <person name="Yamazaki M."/>
            <person name="Ninomiya K."/>
            <person name="Ishibashi T."/>
            <person name="Yamashita H."/>
            <person name="Murakawa K."/>
            <person name="Fujimori K."/>
            <person name="Tanai H."/>
            <person name="Kimata M."/>
            <person name="Watanabe M."/>
            <person name="Hiraoka S."/>
            <person name="Chiba Y."/>
            <person name="Ishida S."/>
            <person name="Ono Y."/>
            <person name="Takiguchi S."/>
            <person name="Watanabe S."/>
            <person name="Yosida M."/>
            <person name="Hotuta T."/>
            <person name="Kusano J."/>
            <person name="Kanehori K."/>
            <person name="Takahashi-Fujii A."/>
            <person name="Hara H."/>
            <person name="Tanase T.-O."/>
            <person name="Nomura Y."/>
            <person name="Togiya S."/>
            <person name="Komai F."/>
            <person name="Hara R."/>
            <person name="Takeuchi K."/>
            <person name="Arita M."/>
            <person name="Imose N."/>
            <person name="Musashino K."/>
            <person name="Yuuki H."/>
            <person name="Oshima A."/>
            <person name="Sasaki N."/>
            <person name="Aotsuka S."/>
            <person name="Yoshikawa Y."/>
            <person name="Matsunawa H."/>
            <person name="Ichihara T."/>
            <person name="Shiohata N."/>
            <person name="Sano S."/>
            <person name="Moriya S."/>
            <person name="Momiyama H."/>
            <person name="Satoh N."/>
            <person name="Takami S."/>
            <person name="Terashima Y."/>
            <person name="Suzuki O."/>
            <person name="Nakagawa S."/>
            <person name="Senoh A."/>
            <person name="Mizoguchi H."/>
            <person name="Goto Y."/>
            <person name="Shimizu F."/>
            <person name="Wakebe H."/>
            <person name="Hishigaki H."/>
            <person name="Watanabe T."/>
            <person name="Sugiyama A."/>
            <person name="Takemoto M."/>
            <person name="Kawakami B."/>
            <person name="Yamazaki M."/>
            <person name="Watanabe K."/>
            <person name="Kumagai A."/>
            <person name="Itakura S."/>
            <person name="Fukuzumi Y."/>
            <person name="Fujimori Y."/>
            <person name="Komiyama M."/>
            <person name="Tashiro H."/>
            <person name="Tanigami A."/>
            <person name="Fujiwara T."/>
            <person name="Ono T."/>
            <person name="Yamada K."/>
            <person name="Fujii Y."/>
            <person name="Ozaki K."/>
            <person name="Hirao M."/>
            <person name="Ohmori Y."/>
            <person name="Kawabata A."/>
            <person name="Hikiji T."/>
            <person name="Kobatake N."/>
            <person name="Inagaki H."/>
            <person name="Ikema Y."/>
            <person name="Okamoto S."/>
            <person name="Okitani R."/>
            <person name="Kawakami T."/>
            <person name="Noguchi S."/>
            <person name="Itoh T."/>
            <person name="Shigeta K."/>
            <person name="Senba T."/>
            <person name="Matsumura K."/>
            <person name="Nakajima Y."/>
            <person name="Mizuno T."/>
            <person name="Morinaga M."/>
            <person name="Sasaki M."/>
            <person name="Togashi T."/>
            <person name="Oyama M."/>
            <person name="Hata H."/>
            <person name="Watanabe M."/>
            <person name="Komatsu T."/>
            <person name="Mizushima-Sugano J."/>
            <person name="Satoh T."/>
            <person name="Shirai Y."/>
            <person name="Takahashi Y."/>
            <person name="Nakagawa K."/>
            <person name="Okumura K."/>
            <person name="Nagase T."/>
            <person name="Nomura N."/>
            <person name="Kikuchi H."/>
            <person name="Masuho Y."/>
            <person name="Yamashita R."/>
            <person name="Nakai K."/>
            <person name="Yada T."/>
            <person name="Nakamura Y."/>
            <person name="Ohara O."/>
            <person name="Isogai T."/>
            <person name="Sugano S."/>
        </authorList>
    </citation>
    <scope>NUCLEOTIDE SEQUENCE [LARGE SCALE MRNA] (ISOFORMS 1 AND 2)</scope>
    <source>
        <tissue>Cerebellum</tissue>
    </source>
</reference>
<reference key="2">
    <citation type="journal article" date="2004" name="Nature">
        <title>The DNA sequence and comparative analysis of human chromosome 5.</title>
        <authorList>
            <person name="Schmutz J."/>
            <person name="Martin J."/>
            <person name="Terry A."/>
            <person name="Couronne O."/>
            <person name="Grimwood J."/>
            <person name="Lowry S."/>
            <person name="Gordon L.A."/>
            <person name="Scott D."/>
            <person name="Xie G."/>
            <person name="Huang W."/>
            <person name="Hellsten U."/>
            <person name="Tran-Gyamfi M."/>
            <person name="She X."/>
            <person name="Prabhakar S."/>
            <person name="Aerts A."/>
            <person name="Altherr M."/>
            <person name="Bajorek E."/>
            <person name="Black S."/>
            <person name="Branscomb E."/>
            <person name="Caoile C."/>
            <person name="Challacombe J.F."/>
            <person name="Chan Y.M."/>
            <person name="Denys M."/>
            <person name="Detter J.C."/>
            <person name="Escobar J."/>
            <person name="Flowers D."/>
            <person name="Fotopulos D."/>
            <person name="Glavina T."/>
            <person name="Gomez M."/>
            <person name="Gonzales E."/>
            <person name="Goodstein D."/>
            <person name="Grigoriev I."/>
            <person name="Groza M."/>
            <person name="Hammon N."/>
            <person name="Hawkins T."/>
            <person name="Haydu L."/>
            <person name="Israni S."/>
            <person name="Jett J."/>
            <person name="Kadner K."/>
            <person name="Kimball H."/>
            <person name="Kobayashi A."/>
            <person name="Lopez F."/>
            <person name="Lou Y."/>
            <person name="Martinez D."/>
            <person name="Medina C."/>
            <person name="Morgan J."/>
            <person name="Nandkeshwar R."/>
            <person name="Noonan J.P."/>
            <person name="Pitluck S."/>
            <person name="Pollard M."/>
            <person name="Predki P."/>
            <person name="Priest J."/>
            <person name="Ramirez L."/>
            <person name="Retterer J."/>
            <person name="Rodriguez A."/>
            <person name="Rogers S."/>
            <person name="Salamov A."/>
            <person name="Salazar A."/>
            <person name="Thayer N."/>
            <person name="Tice H."/>
            <person name="Tsai M."/>
            <person name="Ustaszewska A."/>
            <person name="Vo N."/>
            <person name="Wheeler J."/>
            <person name="Wu K."/>
            <person name="Yang J."/>
            <person name="Dickson M."/>
            <person name="Cheng J.-F."/>
            <person name="Eichler E.E."/>
            <person name="Olsen A."/>
            <person name="Pennacchio L.A."/>
            <person name="Rokhsar D.S."/>
            <person name="Richardson P."/>
            <person name="Lucas S.M."/>
            <person name="Myers R.M."/>
            <person name="Rubin E.M."/>
        </authorList>
    </citation>
    <scope>NUCLEOTIDE SEQUENCE [LARGE SCALE GENOMIC DNA]</scope>
</reference>
<reference key="3">
    <citation type="journal article" date="2004" name="Genome Res.">
        <title>The status, quality, and expansion of the NIH full-length cDNA project: the Mammalian Gene Collection (MGC).</title>
        <authorList>
            <consortium name="The MGC Project Team"/>
        </authorList>
    </citation>
    <scope>NUCLEOTIDE SEQUENCE [LARGE SCALE MRNA] (ISOFORM 1)</scope>
    <source>
        <tissue>Brain</tissue>
        <tissue>Placenta</tissue>
    </source>
</reference>
<reference key="4">
    <citation type="journal article" date="2009" name="Science">
        <title>Lysine acetylation targets protein complexes and co-regulates major cellular functions.</title>
        <authorList>
            <person name="Choudhary C."/>
            <person name="Kumar C."/>
            <person name="Gnad F."/>
            <person name="Nielsen M.L."/>
            <person name="Rehman M."/>
            <person name="Walther T.C."/>
            <person name="Olsen J.V."/>
            <person name="Mann M."/>
        </authorList>
    </citation>
    <scope>ACETYLATION [LARGE SCALE ANALYSIS] AT LYS-142</scope>
    <scope>IDENTIFICATION BY MASS SPECTROMETRY [LARGE SCALE ANALYSIS]</scope>
</reference>
<reference key="5">
    <citation type="journal article" date="2011" name="BMC Syst. Biol.">
        <title>Initial characterization of the human central proteome.</title>
        <authorList>
            <person name="Burkard T.R."/>
            <person name="Planyavsky M."/>
            <person name="Kaupe I."/>
            <person name="Breitwieser F.P."/>
            <person name="Buerckstuemmer T."/>
            <person name="Bennett K.L."/>
            <person name="Superti-Furga G."/>
            <person name="Colinge J."/>
        </authorList>
    </citation>
    <scope>IDENTIFICATION BY MASS SPECTROMETRY [LARGE SCALE ANALYSIS]</scope>
</reference>
<reference key="6">
    <citation type="journal article" date="2014" name="J. Proteomics">
        <title>An enzyme assisted RP-RPLC approach for in-depth analysis of human liver phosphoproteome.</title>
        <authorList>
            <person name="Bian Y."/>
            <person name="Song C."/>
            <person name="Cheng K."/>
            <person name="Dong M."/>
            <person name="Wang F."/>
            <person name="Huang J."/>
            <person name="Sun D."/>
            <person name="Wang L."/>
            <person name="Ye M."/>
            <person name="Zou H."/>
        </authorList>
    </citation>
    <scope>IDENTIFICATION BY MASS SPECTROMETRY [LARGE SCALE ANALYSIS]</scope>
    <source>
        <tissue>Liver</tissue>
    </source>
</reference>
<proteinExistence type="evidence at protein level"/>
<sequence>MAVRSLWAGRLRVQRLLAWSAAWESKGWPLPFSTATQRTAGEDCRSEDPPDELGPPLAERALRVKAVKLEKEVQDLTVRYQRAIADCENIRRRTQRCVEDAKIFGIQSFCKDLVEVADILEKTTECISEESEPEDQKLTLEKVFRGLLLLEAKLKSVFAKHGLEKLTPIGDKYDPHEHELICHVPAGVGVQPGTVALVRQDGYKLHGRTIRLARVEVAVESQRRL</sequence>
<name>GRPE2_HUMAN</name>
<gene>
    <name type="primary">GRPEL2</name>
</gene>